<gene>
    <name evidence="1" type="primary">astC</name>
    <name evidence="1" type="synonym">argM</name>
    <name type="ordered locus">ECS88_1800</name>
</gene>
<proteinExistence type="inferred from homology"/>
<feature type="chain" id="PRO_1000164375" description="Succinylornithine transaminase">
    <location>
        <begin position="1"/>
        <end position="406"/>
    </location>
</feature>
<feature type="modified residue" description="N6-(pyridoxal phosphate)lysine" evidence="1">
    <location>
        <position position="252"/>
    </location>
</feature>
<dbReference type="EC" id="2.6.1.81" evidence="1"/>
<dbReference type="EMBL" id="CU928161">
    <property type="protein sequence ID" value="CAR03108.1"/>
    <property type="molecule type" value="Genomic_DNA"/>
</dbReference>
<dbReference type="RefSeq" id="WP_000081990.1">
    <property type="nucleotide sequence ID" value="NC_011742.1"/>
</dbReference>
<dbReference type="SMR" id="B7MAV9"/>
<dbReference type="KEGG" id="ecz:ECS88_1800"/>
<dbReference type="HOGENOM" id="CLU_016922_10_1_6"/>
<dbReference type="UniPathway" id="UPA00185">
    <property type="reaction ID" value="UER00281"/>
</dbReference>
<dbReference type="Proteomes" id="UP000000747">
    <property type="component" value="Chromosome"/>
</dbReference>
<dbReference type="GO" id="GO:0042802">
    <property type="term" value="F:identical protein binding"/>
    <property type="evidence" value="ECO:0007669"/>
    <property type="project" value="TreeGrafter"/>
</dbReference>
<dbReference type="GO" id="GO:0030170">
    <property type="term" value="F:pyridoxal phosphate binding"/>
    <property type="evidence" value="ECO:0007669"/>
    <property type="project" value="UniProtKB-UniRule"/>
</dbReference>
<dbReference type="GO" id="GO:0043825">
    <property type="term" value="F:succinylornithine transaminase activity"/>
    <property type="evidence" value="ECO:0007669"/>
    <property type="project" value="UniProtKB-EC"/>
</dbReference>
<dbReference type="GO" id="GO:1901607">
    <property type="term" value="P:alpha-amino acid biosynthetic process"/>
    <property type="evidence" value="ECO:0007669"/>
    <property type="project" value="UniProtKB-ARBA"/>
</dbReference>
<dbReference type="GO" id="GO:0019544">
    <property type="term" value="P:arginine catabolic process to glutamate"/>
    <property type="evidence" value="ECO:0007669"/>
    <property type="project" value="UniProtKB-UniRule"/>
</dbReference>
<dbReference type="GO" id="GO:0019545">
    <property type="term" value="P:arginine catabolic process to succinate"/>
    <property type="evidence" value="ECO:0007669"/>
    <property type="project" value="UniProtKB-UniRule"/>
</dbReference>
<dbReference type="GO" id="GO:0006593">
    <property type="term" value="P:ornithine catabolic process"/>
    <property type="evidence" value="ECO:0007669"/>
    <property type="project" value="InterPro"/>
</dbReference>
<dbReference type="CDD" id="cd00610">
    <property type="entry name" value="OAT_like"/>
    <property type="match status" value="1"/>
</dbReference>
<dbReference type="FunFam" id="3.40.640.10:FF:000004">
    <property type="entry name" value="Acetylornithine aminotransferase"/>
    <property type="match status" value="1"/>
</dbReference>
<dbReference type="FunFam" id="3.90.1150.10:FF:000009">
    <property type="entry name" value="Succinylornithine transaminase"/>
    <property type="match status" value="1"/>
</dbReference>
<dbReference type="Gene3D" id="3.90.1150.10">
    <property type="entry name" value="Aspartate Aminotransferase, domain 1"/>
    <property type="match status" value="1"/>
</dbReference>
<dbReference type="Gene3D" id="3.40.640.10">
    <property type="entry name" value="Type I PLP-dependent aspartate aminotransferase-like (Major domain)"/>
    <property type="match status" value="1"/>
</dbReference>
<dbReference type="HAMAP" id="MF_01107">
    <property type="entry name" value="ArgD_aminotrans_3"/>
    <property type="match status" value="1"/>
</dbReference>
<dbReference type="HAMAP" id="MF_01173">
    <property type="entry name" value="AstC_aminotrans_3"/>
    <property type="match status" value="1"/>
</dbReference>
<dbReference type="InterPro" id="IPR017652">
    <property type="entry name" value="Ac/SucOrn_transaminase_bac"/>
</dbReference>
<dbReference type="InterPro" id="IPR004636">
    <property type="entry name" value="AcOrn/SuccOrn_fam"/>
</dbReference>
<dbReference type="InterPro" id="IPR005814">
    <property type="entry name" value="Aminotrans_3"/>
</dbReference>
<dbReference type="InterPro" id="IPR049704">
    <property type="entry name" value="Aminotrans_3_PPA_site"/>
</dbReference>
<dbReference type="InterPro" id="IPR050103">
    <property type="entry name" value="Class-III_PLP-dep_AT"/>
</dbReference>
<dbReference type="InterPro" id="IPR015424">
    <property type="entry name" value="PyrdxlP-dep_Trfase"/>
</dbReference>
<dbReference type="InterPro" id="IPR015421">
    <property type="entry name" value="PyrdxlP-dep_Trfase_major"/>
</dbReference>
<dbReference type="InterPro" id="IPR015422">
    <property type="entry name" value="PyrdxlP-dep_Trfase_small"/>
</dbReference>
<dbReference type="InterPro" id="IPR026330">
    <property type="entry name" value="SOAT"/>
</dbReference>
<dbReference type="NCBIfam" id="TIGR03246">
    <property type="entry name" value="arg_catab_astC"/>
    <property type="match status" value="1"/>
</dbReference>
<dbReference type="NCBIfam" id="TIGR00707">
    <property type="entry name" value="argD"/>
    <property type="match status" value="1"/>
</dbReference>
<dbReference type="NCBIfam" id="NF002325">
    <property type="entry name" value="PRK01278.1"/>
    <property type="match status" value="1"/>
</dbReference>
<dbReference type="NCBIfam" id="NF003468">
    <property type="entry name" value="PRK05093.1"/>
    <property type="match status" value="1"/>
</dbReference>
<dbReference type="NCBIfam" id="NF009047">
    <property type="entry name" value="PRK12381.1"/>
    <property type="match status" value="1"/>
</dbReference>
<dbReference type="PANTHER" id="PTHR11986">
    <property type="entry name" value="AMINOTRANSFERASE CLASS III"/>
    <property type="match status" value="1"/>
</dbReference>
<dbReference type="PANTHER" id="PTHR11986:SF113">
    <property type="entry name" value="SUCCINYLORNITHINE TRANSAMINASE"/>
    <property type="match status" value="1"/>
</dbReference>
<dbReference type="Pfam" id="PF00202">
    <property type="entry name" value="Aminotran_3"/>
    <property type="match status" value="1"/>
</dbReference>
<dbReference type="PIRSF" id="PIRSF000521">
    <property type="entry name" value="Transaminase_4ab_Lys_Orn"/>
    <property type="match status" value="1"/>
</dbReference>
<dbReference type="SUPFAM" id="SSF53383">
    <property type="entry name" value="PLP-dependent transferases"/>
    <property type="match status" value="1"/>
</dbReference>
<dbReference type="PROSITE" id="PS00600">
    <property type="entry name" value="AA_TRANSFER_CLASS_3"/>
    <property type="match status" value="1"/>
</dbReference>
<organism>
    <name type="scientific">Escherichia coli O45:K1 (strain S88 / ExPEC)</name>
    <dbReference type="NCBI Taxonomy" id="585035"/>
    <lineage>
        <taxon>Bacteria</taxon>
        <taxon>Pseudomonadati</taxon>
        <taxon>Pseudomonadota</taxon>
        <taxon>Gammaproteobacteria</taxon>
        <taxon>Enterobacterales</taxon>
        <taxon>Enterobacteriaceae</taxon>
        <taxon>Escherichia</taxon>
    </lineage>
</organism>
<name>ASTC_ECO45</name>
<evidence type="ECO:0000255" key="1">
    <source>
        <dbReference type="HAMAP-Rule" id="MF_01173"/>
    </source>
</evidence>
<protein>
    <recommendedName>
        <fullName evidence="1">Succinylornithine transaminase</fullName>
        <ecNumber evidence="1">2.6.1.81</ecNumber>
    </recommendedName>
    <alternativeName>
        <fullName evidence="1">Succinylornithine aminotransferase</fullName>
    </alternativeName>
</protein>
<keyword id="KW-0032">Aminotransferase</keyword>
<keyword id="KW-0056">Arginine metabolism</keyword>
<keyword id="KW-0663">Pyridoxal phosphate</keyword>
<keyword id="KW-1185">Reference proteome</keyword>
<keyword id="KW-0808">Transferase</keyword>
<comment type="function">
    <text evidence="1">Catalyzes the transamination of N(2)-succinylornithine and alpha-ketoglutarate into N(2)-succinylglutamate semialdehyde and glutamate. Can also act as an acetylornithine aminotransferase.</text>
</comment>
<comment type="catalytic activity">
    <reaction evidence="1">
        <text>N(2)-succinyl-L-ornithine + 2-oxoglutarate = N-succinyl-L-glutamate 5-semialdehyde + L-glutamate</text>
        <dbReference type="Rhea" id="RHEA:16953"/>
        <dbReference type="ChEBI" id="CHEBI:16810"/>
        <dbReference type="ChEBI" id="CHEBI:29985"/>
        <dbReference type="ChEBI" id="CHEBI:58514"/>
        <dbReference type="ChEBI" id="CHEBI:58520"/>
        <dbReference type="EC" id="2.6.1.81"/>
    </reaction>
</comment>
<comment type="cofactor">
    <cofactor evidence="1">
        <name>pyridoxal 5'-phosphate</name>
        <dbReference type="ChEBI" id="CHEBI:597326"/>
    </cofactor>
</comment>
<comment type="pathway">
    <text evidence="1">Amino-acid degradation; L-arginine degradation via AST pathway; L-glutamate and succinate from L-arginine: step 3/5.</text>
</comment>
<comment type="similarity">
    <text evidence="1">Belongs to the class-III pyridoxal-phosphate-dependent aminotransferase family. AstC subfamily.</text>
</comment>
<reference key="1">
    <citation type="journal article" date="2009" name="PLoS Genet.">
        <title>Organised genome dynamics in the Escherichia coli species results in highly diverse adaptive paths.</title>
        <authorList>
            <person name="Touchon M."/>
            <person name="Hoede C."/>
            <person name="Tenaillon O."/>
            <person name="Barbe V."/>
            <person name="Baeriswyl S."/>
            <person name="Bidet P."/>
            <person name="Bingen E."/>
            <person name="Bonacorsi S."/>
            <person name="Bouchier C."/>
            <person name="Bouvet O."/>
            <person name="Calteau A."/>
            <person name="Chiapello H."/>
            <person name="Clermont O."/>
            <person name="Cruveiller S."/>
            <person name="Danchin A."/>
            <person name="Diard M."/>
            <person name="Dossat C."/>
            <person name="Karoui M.E."/>
            <person name="Frapy E."/>
            <person name="Garry L."/>
            <person name="Ghigo J.M."/>
            <person name="Gilles A.M."/>
            <person name="Johnson J."/>
            <person name="Le Bouguenec C."/>
            <person name="Lescat M."/>
            <person name="Mangenot S."/>
            <person name="Martinez-Jehanne V."/>
            <person name="Matic I."/>
            <person name="Nassif X."/>
            <person name="Oztas S."/>
            <person name="Petit M.A."/>
            <person name="Pichon C."/>
            <person name="Rouy Z."/>
            <person name="Ruf C.S."/>
            <person name="Schneider D."/>
            <person name="Tourret J."/>
            <person name="Vacherie B."/>
            <person name="Vallenet D."/>
            <person name="Medigue C."/>
            <person name="Rocha E.P.C."/>
            <person name="Denamur E."/>
        </authorList>
    </citation>
    <scope>NUCLEOTIDE SEQUENCE [LARGE SCALE GENOMIC DNA]</scope>
    <source>
        <strain>S88 / ExPEC</strain>
    </source>
</reference>
<sequence>MSQPITRENFDEWMIPVYAPAPFIPVRGEGSRLWDQQGKEYIDFAGGIAVNALGHAHPELREALNEQASKFWHTGNGYTNEPVLRLAKKLIDATFADRVFFCNSGAEANEAALKLARKFAHDRYGSHKSGIVAFKNAFHGRTLFTVSAGGQPAYSQDFAPLPPDIRHAAYNDINSASALIDDATCAVIVEPIQGEGGVVPASNAFLQGLRELCDRHNALLIFDEVQTGVGRTGELYACMHYGVTPDLLTTAKALGGGFPVGALLATEECASVMTVGTHGTTYGGNPLASAVAGKVLDLINTPEMLNGVKQRHDWFVERLNSINHHYSLFSEVRGLGLLIGCVLNADYAGQAKQISQEAVKAGVMVLIAGGNVVRFAPALNVSEEEVTTGLDRFAAACEHFVSRGSS</sequence>
<accession>B7MAV9</accession>